<comment type="function">
    <text evidence="1 5 6 7 8 9 10 11 12 13 15 16 18">Cell surface receptor implicated in modulating innate and adaptive immune responses. Generally accepted to have an inhibiting function. Reports on stimulating functions suggest that the activity may be influenced by the cellular context and/or the respective ligand (PubMed:18006747). Regulates macrophage activation (PubMed:11823861). Inhibits T-helper type 1 lymphocyte (Th1)-mediated auto- and alloimmune responses and promotes immunological tolerance (PubMed:14556006, PubMed:18006747). In CD8+ cells attenuates TCR-induced signaling, specifically by blocking NF-kappaB and NFAT promoter activities resulting in the loss of IL-2 secretion. The function may implicate its association with LCK proposed to impair phosphorylation of TCR subunits (By similarity). In contrast, shown to activate TCR-induced signaling in T-cells probably implicating ZAP70, LCP2, LCK and FYN (PubMed:21807895). Expressed on Treg cells can inhibit Th17 cell responses (By similarity). Receptor for LGALS9. Binding to LGALS9 is believed to result in suppression of T-cell responses; the resulting apoptosis of antigen-specific cells may implicate HAVCR2 phosphorylation and disruption of its association with BAG6 (PubMed:22863785). Binding to LGALS9 is proposed to be involved in innate immune response to intracellular pathogens. Expressed on Th1 cells interacts with LGALS9 expressed on Mycobacterium tuberculosis-infected macrophages to stimulate antibactericidal activity including IL-1 beta secretion and to restrict intracellular bacterial growth (PubMed:20937702). However, the function as receptor for LGALS9 has been challenged (By similarity). Also reported to enhance CD8+ T-cell responses to an acute infection such as by Listeria monocytogenes (PubMed:24567532). Receptor for phosphatidylserine (PtSer); PtSer-binding is calcium-dependent (PubMed:20083673). May recognize PtSer on apoptotic cells leading to their phagocytosis. Mediates the engulfment of apoptotic cells by dendritic cells (PubMed:19224762). Expressed on T-cells, promotes conjugation but not engulfment of apoptotic cells (PubMed:20083673). Expressed on dendritic cells (DCs) positively regulates innate immune response and in synergy with Toll-like receptors promotes secretion of TNF-alpha (PubMed:18006747). In tumor-imfiltrating DCs suppresses nucleic acid-mediated innate immune repsonse by interaction with HMGB1 and interfering with nucleic acid-sensing and trafficking of nucleid acids to endosomes (PubMed:22842346). Can enhance mast cell production of Th2 cytokines Il-4, IL-6 and IL-13 (PubMed:17620455). Expressed on natural killer (NK) cells acts as a coreceptor to enhance IFN-gamma production in response to LGALS9. In contrast, shown to suppress NK cell-mediated cytotoxicity (By similarity). Negatively regulates NK cell function in LPS-induced endotoxic shock (PubMed:25337993).</text>
</comment>
<comment type="subunit">
    <text evidence="1 12 13 14">Interacts with HMGB1; impairs HMGB1 binding to B-DNA and likely HMGB1-mediated innate immune response (PubMed:22842346). Interacts with BAG6 (PubMed:22863785). Interacts (phosphorylated) with PIK3R1 and PIK3R2. Interacts (not dependent on its phosphorylation status) with FYN (PubMed:21807895). Interacts (in basal state T-cells) with VAV1; AKT1/2, LCP2, ZAP70, SYK, PIK3R1, FYN, SH3BP2 and SH2D2A. Interacts (in activated T-cells) with LCK and PLCG (By similarity). Interacts with ILF3; this interaction promotes ILF3 ubiquitination and degradation (By similarity).</text>
</comment>
<comment type="interaction">
    <interactant intactId="EBI-6665112">
        <id>Q8VIM0</id>
    </interactant>
    <interactant intactId="EBI-6665811">
        <id>P63158</id>
        <label>Hmgb1</label>
    </interactant>
    <organismsDiffer>false</organismsDiffer>
    <experiments>4</experiments>
</comment>
<comment type="interaction">
    <interactant intactId="EBI-6665112">
        <id>Q8VIM0</id>
    </interactant>
    <interactant intactId="EBI-11316797">
        <id>O08573-2</id>
        <label>Lgals9</label>
    </interactant>
    <organismsDiffer>false</organismsDiffer>
    <experiments>4</experiments>
</comment>
<comment type="subcellular location">
    <molecule>Isoform 1</molecule>
    <subcellularLocation>
        <location evidence="17">Membrane</location>
        <topology evidence="17">Single-pass type I membrane protein</topology>
    </subcellularLocation>
    <subcellularLocation>
        <location evidence="1">Cell junction</location>
    </subcellularLocation>
    <text evidence="1">Localizes to the immunological synapse between CD8+ T-cells and target cells.</text>
</comment>
<comment type="subcellular location">
    <molecule>Isoform 2</molecule>
    <subcellularLocation>
        <location evidence="6">Secreted</location>
    </subcellularLocation>
</comment>
<comment type="alternative products">
    <event type="alternative splicing"/>
    <isoform>
        <id>Q8VIM0-1</id>
        <name>1</name>
        <name>Tim-3L</name>
        <name>flTim-3</name>
        <sequence type="displayed"/>
    </isoform>
    <isoform>
        <id>Q8VIM0-2</id>
        <name>2</name>
        <name>sTim-3</name>
        <sequence type="described" ref="VSP_058116"/>
    </isoform>
</comment>
<comment type="tissue specificity">
    <text evidence="5 6 7 9 15 16">Expressed in T-helper type 1 lymphocytes. Not expressed by naive T-cells but up-regulated as they differentiate into T-helper-1 cells. Also expressed by differentiated type 1 CD8+ cytotoxic T-cells. Expressed on peritoneal exudate macrophages, monocytes, and splenic dendritic cells (DCs). Expression on natural killer (NK) cells is inversely associated with IFN-gamma production during the initial 24 hours of LPS-induced endotoxic shock. Expressed on mast cells.</text>
</comment>
<comment type="domain">
    <text evidence="10">The Ig-like V-type (immunoglobulin-like) domain mediates binding to PtSer involving a Ca(2+) ion.</text>
</comment>
<comment type="PTM">
    <text evidence="1 12">Phosphorylated on tyrosine residues; modestly increased after TCR/CD28 stimulation. Can be phosphorylated in the cytoplasmic domain by FYN (PubMed:21807895). Phosphorylation at Tyr-256 is increased by stimulation with ligand LGALS9 (By similarity).</text>
</comment>
<comment type="PTM">
    <text evidence="12">N-glycosylated.</text>
</comment>
<comment type="polymorphism">
    <text evidence="10">Polymorphic differences between BALB/c and HBA alleles in the Ig-like V-type domain are the reason for distinct binding affinities for PtSer. The HBA2 allele binds PtSer approximately 50% less than BALB/c.</text>
</comment>
<comment type="miscellaneous">
    <text>Belongs to the T-cell and airway phenotype regulator (Tapr) locus, a single chromosomal region that confers reduced T-helper type 2 responsiveness and protects against airway hyperactivity (AHR), the hallmark of human asthma.</text>
</comment>
<comment type="miscellaneous">
    <text>In vivo administration of antibody to HAVCR2 enhances the clinical and pathological severity of experimental autoimmune encephalomyelitis (EAE), a Th1-dependent autoimmune disease and increases the number and activation level of macrophages.</text>
</comment>
<comment type="miscellaneous">
    <text evidence="13">Endogenous expression on dendritic cells is proposed to act as a negative regulator of chemotherapy-induced antitumor responses.</text>
</comment>
<comment type="similarity">
    <text evidence="17">Belongs to the immunoglobulin superfamily. TIM family.</text>
</comment>
<comment type="caution">
    <text evidence="17">Experimental results based on the injection of HAVCR2/TIM-3 antibodies or use of HAVCR2/TIM-3-Fc fusion proteins can reflect changes in the activity of several cell types and pathways as HAVCR2/TIM-3 is expressed by multiple immune cell types.</text>
</comment>
<comment type="online information" name="Functional Glycomics Gateway - Glycan Binding">
    <link uri="http://www.functionalglycomics.org/glycomics/GBPServlet?&amp;operationType=view&amp;cbpId=cbp_mou_other_382"/>
    <text>TIMD-3</text>
</comment>
<gene>
    <name type="primary">Havcr2</name>
    <name type="synonym">Tim3</name>
    <name type="synonym">Timd3</name>
</gene>
<evidence type="ECO:0000250" key="1">
    <source>
        <dbReference type="UniProtKB" id="Q8TDQ0"/>
    </source>
</evidence>
<evidence type="ECO:0000255" key="2"/>
<evidence type="ECO:0000255" key="3">
    <source>
        <dbReference type="PROSITE-ProRule" id="PRU00114"/>
    </source>
</evidence>
<evidence type="ECO:0000256" key="4">
    <source>
        <dbReference type="SAM" id="MobiDB-lite"/>
    </source>
</evidence>
<evidence type="ECO:0000269" key="5">
    <source>
    </source>
</evidence>
<evidence type="ECO:0000269" key="6">
    <source>
    </source>
</evidence>
<evidence type="ECO:0000269" key="7">
    <source>
    </source>
</evidence>
<evidence type="ECO:0000269" key="8">
    <source>
    </source>
</evidence>
<evidence type="ECO:0000269" key="9">
    <source>
    </source>
</evidence>
<evidence type="ECO:0000269" key="10">
    <source>
    </source>
</evidence>
<evidence type="ECO:0000269" key="11">
    <source>
    </source>
</evidence>
<evidence type="ECO:0000269" key="12">
    <source>
    </source>
</evidence>
<evidence type="ECO:0000269" key="13">
    <source>
    </source>
</evidence>
<evidence type="ECO:0000269" key="14">
    <source>
    </source>
</evidence>
<evidence type="ECO:0000269" key="15">
    <source>
    </source>
</evidence>
<evidence type="ECO:0000269" key="16">
    <source>
    </source>
</evidence>
<evidence type="ECO:0000305" key="17"/>
<evidence type="ECO:0000305" key="18">
    <source>
    </source>
</evidence>
<evidence type="ECO:0007744" key="19">
    <source>
        <dbReference type="PDB" id="3KAA"/>
    </source>
</evidence>
<evidence type="ECO:0007829" key="20">
    <source>
        <dbReference type="PDB" id="3KAA"/>
    </source>
</evidence>
<accession>Q8VIM0</accession>
<keyword id="KW-0002">3D-structure</keyword>
<keyword id="KW-1064">Adaptive immunity</keyword>
<keyword id="KW-0025">Alternative splicing</keyword>
<keyword id="KW-0965">Cell junction</keyword>
<keyword id="KW-1015">Disulfide bond</keyword>
<keyword id="KW-0325">Glycoprotein</keyword>
<keyword id="KW-0391">Immunity</keyword>
<keyword id="KW-0393">Immunoglobulin domain</keyword>
<keyword id="KW-0395">Inflammatory response</keyword>
<keyword id="KW-0399">Innate immunity</keyword>
<keyword id="KW-0472">Membrane</keyword>
<keyword id="KW-0479">Metal-binding</keyword>
<keyword id="KW-0597">Phosphoprotein</keyword>
<keyword id="KW-1185">Reference proteome</keyword>
<keyword id="KW-0964">Secreted</keyword>
<keyword id="KW-0732">Signal</keyword>
<keyword id="KW-0812">Transmembrane</keyword>
<keyword id="KW-1133">Transmembrane helix</keyword>
<organism>
    <name type="scientific">Mus musculus</name>
    <name type="common">Mouse</name>
    <dbReference type="NCBI Taxonomy" id="10090"/>
    <lineage>
        <taxon>Eukaryota</taxon>
        <taxon>Metazoa</taxon>
        <taxon>Chordata</taxon>
        <taxon>Craniata</taxon>
        <taxon>Vertebrata</taxon>
        <taxon>Euteleostomi</taxon>
        <taxon>Mammalia</taxon>
        <taxon>Eutheria</taxon>
        <taxon>Euarchontoglires</taxon>
        <taxon>Glires</taxon>
        <taxon>Rodentia</taxon>
        <taxon>Myomorpha</taxon>
        <taxon>Muroidea</taxon>
        <taxon>Muridae</taxon>
        <taxon>Murinae</taxon>
        <taxon>Mus</taxon>
        <taxon>Mus</taxon>
    </lineage>
</organism>
<proteinExistence type="evidence at protein level"/>
<reference key="1">
    <citation type="journal article" date="2001" name="Nat. Immunol.">
        <title>Identification of Tapr (an airway hyperreactivity regulatory locus) and the linked Tim gene family.</title>
        <authorList>
            <person name="McIntire J.J."/>
            <person name="Umetsu S.E."/>
            <person name="Akbari O."/>
            <person name="Potter M."/>
            <person name="Kuchroo V.K."/>
            <person name="Barsh G.S."/>
            <person name="Freeman G.J."/>
            <person name="Umetsu D.T."/>
            <person name="DeKruyff R.H."/>
        </authorList>
    </citation>
    <scope>NUCLEOTIDE SEQUENCE [MRNA]</scope>
    <source>
        <strain>DBA/2J</strain>
        <tissue>Spleen</tissue>
    </source>
</reference>
<reference key="2">
    <citation type="journal article" date="2009" name="PLoS Biol.">
        <title>Lineage-specific biology revealed by a finished genome assembly of the mouse.</title>
        <authorList>
            <person name="Church D.M."/>
            <person name="Goodstadt L."/>
            <person name="Hillier L.W."/>
            <person name="Zody M.C."/>
            <person name="Goldstein S."/>
            <person name="She X."/>
            <person name="Bult C.J."/>
            <person name="Agarwala R."/>
            <person name="Cherry J.L."/>
            <person name="DiCuccio M."/>
            <person name="Hlavina W."/>
            <person name="Kapustin Y."/>
            <person name="Meric P."/>
            <person name="Maglott D."/>
            <person name="Birtle Z."/>
            <person name="Marques A.C."/>
            <person name="Graves T."/>
            <person name="Zhou S."/>
            <person name="Teague B."/>
            <person name="Potamousis K."/>
            <person name="Churas C."/>
            <person name="Place M."/>
            <person name="Herschleb J."/>
            <person name="Runnheim R."/>
            <person name="Forrest D."/>
            <person name="Amos-Landgraf J."/>
            <person name="Schwartz D.C."/>
            <person name="Cheng Z."/>
            <person name="Lindblad-Toh K."/>
            <person name="Eichler E.E."/>
            <person name="Ponting C.P."/>
        </authorList>
    </citation>
    <scope>NUCLEOTIDE SEQUENCE [LARGE SCALE GENOMIC DNA]</scope>
    <source>
        <strain>C57BL/6J</strain>
    </source>
</reference>
<reference key="3">
    <citation type="journal article" date="2002" name="Nature">
        <title>Th1-specific cell surface protein Tim-3 regulates macrophage activation and severity of an autoimmune disease.</title>
        <authorList>
            <person name="Monney L."/>
            <person name="Sabatos C.A."/>
            <person name="Gaglia J.L."/>
            <person name="Ryu A."/>
            <person name="Waldner H."/>
            <person name="Chernova T."/>
            <person name="Manning S."/>
            <person name="Greenfield E.A."/>
            <person name="Coyle A.J."/>
            <person name="Sobel R.A."/>
            <person name="Freeman G.J."/>
            <person name="Kuchroo V.K."/>
        </authorList>
    </citation>
    <scope>FUNCTION</scope>
    <scope>TISSUE SPECIFICITY</scope>
</reference>
<reference key="4">
    <citation type="journal article" date="2003" name="Nat. Immunol.">
        <title>Interaction of Tim-3 and Tim-3 ligand regulates T helper type 1 responses and induction of peripheral tolerance.</title>
        <authorList>
            <person name="Sabatos C.A."/>
            <person name="Chakravarti S."/>
            <person name="Cha E."/>
            <person name="Schubart A."/>
            <person name="Sanchez-Fueyo A."/>
            <person name="Zheng X.X."/>
            <person name="Coyle A.J."/>
            <person name="Strom T.B."/>
            <person name="Freeman G.J."/>
            <person name="Kuchroo V.K."/>
        </authorList>
    </citation>
    <scope>ALTERNATIVE SPLICING</scope>
    <scope>FUNCTION</scope>
    <scope>TISSUE SPECIFICITY</scope>
    <scope>SUBCELLULAR LOCATION</scope>
</reference>
<reference key="5">
    <citation type="journal article" date="2007" name="Blood">
        <title>TIM-1 and TIM-3 enhancement of Th2 cytokine production by mast cells.</title>
        <authorList>
            <person name="Nakae S."/>
            <person name="Iikura M."/>
            <person name="Suto H."/>
            <person name="Akiba H."/>
            <person name="Umetsu D.T."/>
            <person name="Dekruyff R.H."/>
            <person name="Saito H."/>
            <person name="Galli S.J."/>
        </authorList>
    </citation>
    <scope>FUNCTION</scope>
    <scope>TISSUE SPECIFICITY</scope>
</reference>
<reference key="6">
    <citation type="journal article" date="2007" name="Science">
        <title>Promotion of tissue inflammation by the immune receptor Tim-3 expressed on innate immune cells.</title>
        <authorList>
            <person name="Anderson A.C."/>
            <person name="Anderson D.E."/>
            <person name="Bregoli L."/>
            <person name="Hastings W.D."/>
            <person name="Kassam N."/>
            <person name="Lei C."/>
            <person name="Chandwaskar R."/>
            <person name="Karman J."/>
            <person name="Su E.W."/>
            <person name="Hirashima M."/>
            <person name="Bruce J.N."/>
            <person name="Kane L.P."/>
            <person name="Kuchroo V.K."/>
            <person name="Hafler D.A."/>
        </authorList>
    </citation>
    <scope>FUNCTION</scope>
</reference>
<reference key="7">
    <citation type="journal article" date="2009" name="Blood">
        <title>Tim-3 mediates phagocytosis of apoptotic cells and cross-presentation.</title>
        <authorList>
            <person name="Nakayama M."/>
            <person name="Akiba H."/>
            <person name="Takeda K."/>
            <person name="Kojima Y."/>
            <person name="Hashiguchi M."/>
            <person name="Azuma M."/>
            <person name="Yagita H."/>
            <person name="Okumura K."/>
        </authorList>
    </citation>
    <scope>PHOSPHATIDYLSERINE-BINDING</scope>
    <scope>TISSUE SPECIFICITY</scope>
    <scope>FUNCTION</scope>
    <scope>MUTAGENESIS OF GLN-62; ARG-112 AND 120-ASN-ASP-121</scope>
</reference>
<reference key="8">
    <citation type="journal article" date="2010" name="J. Exp. Med.">
        <title>Tim3 binding to galectin-9 stimulates antimicrobial immunity.</title>
        <authorList>
            <person name="Jayaraman P."/>
            <person name="Sada-Ovalle I."/>
            <person name="Beladi S."/>
            <person name="Anderson A.C."/>
            <person name="Dardalhon V."/>
            <person name="Hotta C."/>
            <person name="Kuchroo V.K."/>
            <person name="Behar S.M."/>
        </authorList>
    </citation>
    <scope>FUNCTION</scope>
</reference>
<reference key="9">
    <citation type="journal article" date="2011" name="Mol. Cell. Biol.">
        <title>Phosphotyrosine-dependent coupling of Tim-3 to T-cell receptor signaling pathways.</title>
        <authorList>
            <person name="Lee J."/>
            <person name="Su E.W."/>
            <person name="Zhu C."/>
            <person name="Hainline S."/>
            <person name="Phuah J."/>
            <person name="Moroco J.A."/>
            <person name="Smithgall T.E."/>
            <person name="Kuchroo V.K."/>
            <person name="Kane L.P."/>
        </authorList>
    </citation>
    <scope>FUNCTION</scope>
    <scope>INTERACTION WITH PIK3R1; PIK3R2 AND FYN</scope>
    <scope>MUTAGENESIS OF TYR-256 AND TYR-263</scope>
    <scope>PHOSPHORYLATION</scope>
    <scope>GLYCOSYLATION</scope>
</reference>
<reference key="10">
    <citation type="journal article" date="2012" name="Nat. Immunol.">
        <title>Tumor-infiltrating DCs suppress nucleic acid-mediated innate immune responses through interactions between the receptor TIM-3 and the alarmin HMGB1.</title>
        <authorList>
            <person name="Chiba S."/>
            <person name="Baghdadi M."/>
            <person name="Akiba H."/>
            <person name="Yoshiyama H."/>
            <person name="Kinoshita I."/>
            <person name="Dosaka-Akita H."/>
            <person name="Fujioka Y."/>
            <person name="Ohba Y."/>
            <person name="Gorman J.V."/>
            <person name="Colgan J.D."/>
            <person name="Hirashima M."/>
            <person name="Uede T."/>
            <person name="Takaoka A."/>
            <person name="Yagita H."/>
            <person name="Jinushi M."/>
        </authorList>
    </citation>
    <scope>FUNCTION</scope>
    <scope>INTERACTION WITH HMGB1</scope>
    <scope>INVOLVEMENT IN CHEMOTHERAPY</scope>
</reference>
<reference key="11">
    <citation type="journal article" date="2012" name="Nat. Med.">
        <title>Bat3 promotes T cell responses and autoimmunity by repressing Tim-3-mediated cell death and exhaustion.</title>
        <authorList>
            <person name="Rangachari M."/>
            <person name="Zhu C."/>
            <person name="Sakuishi K."/>
            <person name="Xiao S."/>
            <person name="Karman J."/>
            <person name="Chen A."/>
            <person name="Angin M."/>
            <person name="Wakeham A."/>
            <person name="Greenfield E.A."/>
            <person name="Sobel R.A."/>
            <person name="Okada H."/>
            <person name="McKinnon P.J."/>
            <person name="Mak T.W."/>
            <person name="Addo M.M."/>
            <person name="Anderson A.C."/>
            <person name="Kuchroo V.K."/>
        </authorList>
    </citation>
    <scope>FUNCTION</scope>
    <scope>INTERACTION WITH BAG6</scope>
    <scope>MUTAGENESIS OF TYR-256 AND TYR-263</scope>
</reference>
<reference key="12">
    <citation type="journal article" date="2014" name="J. Immunol.">
        <title>Tim-3 directly enhances CD8 T cell responses to acute Listeria monocytogenes infection.</title>
        <authorList>
            <person name="Gorman J.V."/>
            <person name="Starbeck-Miller G."/>
            <person name="Pham N.L."/>
            <person name="Traver G.L."/>
            <person name="Rothman P.B."/>
            <person name="Harty J.T."/>
            <person name="Colgan J.D."/>
        </authorList>
    </citation>
    <scope>FUNCTION</scope>
    <scope>TISSUE SPECIFICITY</scope>
</reference>
<reference key="13">
    <citation type="journal article" date="2014" name="PLoS ONE">
        <title>Tim-3 negatively mediates natural killer cell function in LPS-induced endotoxic shock.</title>
        <authorList>
            <person name="Hou H."/>
            <person name="Liu W."/>
            <person name="Wu S."/>
            <person name="Lu Y."/>
            <person name="Peng J."/>
            <person name="Zhu Y."/>
            <person name="Lu Y."/>
            <person name="Wang F."/>
            <person name="Sun Z."/>
        </authorList>
    </citation>
    <scope>FUNCTION</scope>
    <scope>TISSUE SPECIFICITY</scope>
</reference>
<reference key="14">
    <citation type="journal article" date="2010" name="J. Immunol.">
        <title>T cell/transmembrane, Ig, and mucin-3 allelic variants differentially recognize phosphatidylserine and mediate phagocytosis of apoptotic cells.</title>
        <authorList>
            <person name="DeKruyff R.H."/>
            <person name="Bu X."/>
            <person name="Ballesteros A."/>
            <person name="Santpiago C."/>
            <person name="Chim Y.L."/>
            <person name="Lee H.H."/>
            <person name="Karisola P."/>
            <person name="Pichavant M."/>
            <person name="Kaplan G.G."/>
            <person name="Umetsu D.T."/>
            <person name="Freeman G.J."/>
            <person name="Casasnovas J.M."/>
        </authorList>
    </citation>
    <scope>X-RAY CRYSTALLOGRAPHY (3.0 ANGSTROMS) OF 29-233 IN COMPLEX WITH PHOSPHATIDYLSERINE</scope>
    <scope>DISULFIDE BOND</scope>
    <scope>FUNCTION</scope>
    <scope>DOMAIN</scope>
    <scope>MUTAGENESIS OF TRP-53; 60-TRP--GLN-62; 118-LEU-MET-119 AND 120-ASN-ASP-121</scope>
</reference>
<sequence>MFSGLTLNCVLLLLQLLLARSLENAYVFEVGKNAYLPCSYTLSTPGALVPMCWGKGFCPWSQCTNELLRTDERNVTYQKSSRYQLKGDLNKGDVSLIIKNVTLDDHGTYCCRIQFPGLMNDKKLELKLDIKAAKVTPAQTAHGDSTTASPRTLTTERNGSETQTLVTLHNNNGTKISTWADEIKDSGETIRTAIHIGVGVSAGLTLALIIGVLILKWYSCKKKKLSSLSLITLANLPPGGLANAGAVRIRSEENIYTIEENVYEVENSNEYYCYVNSQQPS</sequence>
<name>HAVR2_MOUSE</name>
<feature type="signal peptide" evidence="2">
    <location>
        <begin position="1"/>
        <end position="19"/>
    </location>
</feature>
<feature type="chain" id="PRO_0000042102" description="Hepatitis A virus cellular receptor 2 homolog">
    <location>
        <begin position="20"/>
        <end position="281"/>
    </location>
</feature>
<feature type="topological domain" description="Extracellular" evidence="2">
    <location>
        <begin position="20"/>
        <end position="193"/>
    </location>
</feature>
<feature type="transmembrane region" description="Helical" evidence="2">
    <location>
        <begin position="194"/>
        <end position="214"/>
    </location>
</feature>
<feature type="topological domain" description="Cytoplasmic" evidence="2">
    <location>
        <begin position="215"/>
        <end position="281"/>
    </location>
</feature>
<feature type="domain" description="Ig-like V-type">
    <location>
        <begin position="20"/>
        <end position="125"/>
    </location>
</feature>
<feature type="region of interest" description="Disordered" evidence="4">
    <location>
        <begin position="139"/>
        <end position="160"/>
    </location>
</feature>
<feature type="region of interest" description="Interaction with BAG6" evidence="14">
    <location>
        <begin position="252"/>
        <end position="270"/>
    </location>
</feature>
<feature type="binding site" evidence="10 19">
    <location>
        <position position="61"/>
    </location>
    <ligand>
        <name>a 1,2-diacyl-sn-glycero-3-phospho-L-serine</name>
        <dbReference type="ChEBI" id="CHEBI:57262"/>
    </ligand>
</feature>
<feature type="binding site" evidence="10 19">
    <location>
        <position position="62"/>
    </location>
    <ligand>
        <name>a 1,2-diacyl-sn-glycero-3-phospho-L-serine</name>
        <dbReference type="ChEBI" id="CHEBI:57262"/>
    </ligand>
</feature>
<feature type="binding site" evidence="10 19">
    <location>
        <position position="112"/>
    </location>
    <ligand>
        <name>a 1,2-diacyl-sn-glycero-3-phospho-L-serine</name>
        <dbReference type="ChEBI" id="CHEBI:57262"/>
    </ligand>
</feature>
<feature type="binding site" evidence="10 19">
    <location>
        <position position="115"/>
    </location>
    <ligand>
        <name>Ca(2+)</name>
        <dbReference type="ChEBI" id="CHEBI:29108"/>
    </ligand>
</feature>
<feature type="binding site" evidence="10 19">
    <location>
        <position position="117"/>
    </location>
    <ligand>
        <name>Ca(2+)</name>
        <dbReference type="ChEBI" id="CHEBI:29108"/>
    </ligand>
</feature>
<feature type="binding site" evidence="10 19">
    <location>
        <position position="119"/>
    </location>
    <ligand>
        <name>a 1,2-diacyl-sn-glycero-3-phospho-L-serine</name>
        <dbReference type="ChEBI" id="CHEBI:57262"/>
    </ligand>
</feature>
<feature type="binding site" evidence="10 19">
    <location>
        <position position="120"/>
    </location>
    <ligand>
        <name>Ca(2+)</name>
        <dbReference type="ChEBI" id="CHEBI:29108"/>
    </ligand>
</feature>
<feature type="modified residue" description="Phosphotyrosine; by ITK" evidence="1">
    <location>
        <position position="256"/>
    </location>
</feature>
<feature type="glycosylation site" description="N-linked (GlcNAc...) asparagine" evidence="2">
    <location>
        <position position="74"/>
    </location>
</feature>
<feature type="glycosylation site" description="N-linked (GlcNAc...) asparagine" evidence="2">
    <location>
        <position position="100"/>
    </location>
</feature>
<feature type="glycosylation site" description="O-linked (GalNAc...) threonine" evidence="1">
    <location>
        <position position="146"/>
    </location>
</feature>
<feature type="glycosylation site" description="N-linked (GlcNAc...) asparagine" evidence="2">
    <location>
        <position position="172"/>
    </location>
</feature>
<feature type="disulfide bond" evidence="3 10 19">
    <location>
        <begin position="38"/>
        <end position="111"/>
    </location>
</feature>
<feature type="disulfide bond" evidence="3 10 19">
    <location>
        <begin position="52"/>
        <end position="63"/>
    </location>
</feature>
<feature type="disulfide bond" evidence="3 10 19">
    <location>
        <begin position="58"/>
        <end position="110"/>
    </location>
</feature>
<feature type="splice variant" id="VSP_058116" description="In isoform 2." evidence="6">
    <original>AKVTPAQTAHGDSTTASPRTLTTERNGSETQTLVTLHNNNGTKISTWADEIKDSGETIRTAIHIGVGVSAGLTLALIIGVLILKW</original>
    <variation>G</variation>
    <location>
        <begin position="133"/>
        <end position="217"/>
    </location>
</feature>
<feature type="mutagenesis site" description="Greatly decreases phosphatidylserine binding." evidence="10">
    <original>W</original>
    <variation>A</variation>
    <location>
        <position position="53"/>
    </location>
</feature>
<feature type="mutagenesis site" description="Decreases phosphatidylserine binding." evidence="10">
    <original>WSQ</original>
    <variation>VFE</variation>
    <location>
        <begin position="60"/>
        <end position="62"/>
    </location>
</feature>
<feature type="mutagenesis site" description="No effect on phagocytic activity." evidence="9">
    <original>Q</original>
    <variation>A</variation>
    <location>
        <position position="62"/>
    </location>
</feature>
<feature type="mutagenesis site" description="Abolishes phagocytic activity." evidence="9">
    <original>R</original>
    <variation>A</variation>
    <location>
        <position position="112"/>
    </location>
</feature>
<feature type="mutagenesis site" description="Decreases phosphatidylserine binding." evidence="10">
    <original>LM</original>
    <variation>AA</variation>
    <location>
        <begin position="118"/>
        <end position="119"/>
    </location>
</feature>
<feature type="mutagenesis site" description="Decreases phosphatidylserine binding, abolishes phagocytic activity." evidence="9 10">
    <original>ND</original>
    <variation>AA</variation>
    <location>
        <begin position="120"/>
        <end position="121"/>
    </location>
</feature>
<feature type="mutagenesis site" description="Abolishes phosphorylation, disrupts interaction with PIK3R1 and PIK3R2, no LGALS9-mediated disruption of interaction with BAG6; when associated with F-263." evidence="12 14">
    <original>Y</original>
    <variation>F</variation>
    <location>
        <position position="256"/>
    </location>
</feature>
<feature type="mutagenesis site" description="Abolishes phosphorylation, disrupts interaction with PIK3R1 and PIK3R2, no LGALS9-mediated disruption of interaction with BAG6; when associated with F-256." evidence="12 14">
    <original>Y</original>
    <variation>F</variation>
    <location>
        <position position="263"/>
    </location>
</feature>
<feature type="strand" evidence="20">
    <location>
        <begin position="26"/>
        <end position="28"/>
    </location>
</feature>
<feature type="strand" evidence="20">
    <location>
        <begin position="34"/>
        <end position="36"/>
    </location>
</feature>
<feature type="strand" evidence="20">
    <location>
        <begin position="51"/>
        <end position="57"/>
    </location>
</feature>
<feature type="strand" evidence="20">
    <location>
        <begin position="60"/>
        <end position="62"/>
    </location>
</feature>
<feature type="strand" evidence="20">
    <location>
        <begin position="66"/>
        <end position="70"/>
    </location>
</feature>
<feature type="strand" evidence="20">
    <location>
        <begin position="72"/>
        <end position="77"/>
    </location>
</feature>
<feature type="strand" evidence="20">
    <location>
        <begin position="81"/>
        <end position="85"/>
    </location>
</feature>
<feature type="helix" evidence="20">
    <location>
        <begin position="89"/>
        <end position="91"/>
    </location>
</feature>
<feature type="strand" evidence="20">
    <location>
        <begin position="96"/>
        <end position="100"/>
    </location>
</feature>
<feature type="helix" evidence="20">
    <location>
        <begin position="103"/>
        <end position="105"/>
    </location>
</feature>
<feature type="strand" evidence="20">
    <location>
        <begin position="107"/>
        <end position="113"/>
    </location>
</feature>
<feature type="strand" evidence="20">
    <location>
        <begin position="116"/>
        <end position="119"/>
    </location>
</feature>
<feature type="strand" evidence="20">
    <location>
        <begin position="125"/>
        <end position="130"/>
    </location>
</feature>
<dbReference type="EMBL" id="AF399831">
    <property type="protein sequence ID" value="AAL35776.1"/>
    <property type="molecule type" value="mRNA"/>
</dbReference>
<dbReference type="EMBL" id="AL669948">
    <property type="status" value="NOT_ANNOTATED_CDS"/>
    <property type="molecule type" value="Genomic_DNA"/>
</dbReference>
<dbReference type="CCDS" id="CCDS36135.1">
    <molecule id="Q8VIM0-1"/>
</dbReference>
<dbReference type="RefSeq" id="NP_599011.2">
    <molecule id="Q8VIM0-1"/>
    <property type="nucleotide sequence ID" value="NM_134250.2"/>
</dbReference>
<dbReference type="PDB" id="3KAA">
    <property type="method" value="X-ray"/>
    <property type="resolution" value="3.00 A"/>
    <property type="chains" value="A/B=29-133"/>
</dbReference>
<dbReference type="PDBsum" id="3KAA"/>
<dbReference type="SMR" id="Q8VIM0"/>
<dbReference type="BioGRID" id="228588">
    <property type="interactions" value="1"/>
</dbReference>
<dbReference type="DIP" id="DIP-61460N"/>
<dbReference type="FunCoup" id="Q8VIM0">
    <property type="interactions" value="675"/>
</dbReference>
<dbReference type="IntAct" id="Q8VIM0">
    <property type="interactions" value="8"/>
</dbReference>
<dbReference type="STRING" id="10090.ENSMUSP00000020668"/>
<dbReference type="GlyCosmos" id="Q8VIM0">
    <property type="glycosylation" value="4 sites, No reported glycans"/>
</dbReference>
<dbReference type="GlyGen" id="Q8VIM0">
    <property type="glycosylation" value="4 sites, 1 N-linked glycan (1 site)"/>
</dbReference>
<dbReference type="iPTMnet" id="Q8VIM0"/>
<dbReference type="PhosphoSitePlus" id="Q8VIM0"/>
<dbReference type="PaxDb" id="10090-ENSMUSP00000020668"/>
<dbReference type="ProteomicsDB" id="269812">
    <molecule id="Q8VIM0-1"/>
</dbReference>
<dbReference type="ProteomicsDB" id="269813">
    <molecule id="Q8VIM0-2"/>
</dbReference>
<dbReference type="ABCD" id="Q8VIM0">
    <property type="antibodies" value="18 sequenced antibodies"/>
</dbReference>
<dbReference type="Antibodypedia" id="2450">
    <property type="antibodies" value="1529 antibodies from 48 providers"/>
</dbReference>
<dbReference type="DNASU" id="171285"/>
<dbReference type="Ensembl" id="ENSMUST00000020668.15">
    <molecule id="Q8VIM0-1"/>
    <property type="protein sequence ID" value="ENSMUSP00000020668.9"/>
    <property type="gene ID" value="ENSMUSG00000020399.15"/>
</dbReference>
<dbReference type="GeneID" id="171285"/>
<dbReference type="KEGG" id="mmu:171285"/>
<dbReference type="UCSC" id="uc011xtp.1">
    <molecule id="Q8VIM0-1"/>
    <property type="organism name" value="mouse"/>
</dbReference>
<dbReference type="AGR" id="MGI:2159682"/>
<dbReference type="CTD" id="84868"/>
<dbReference type="MGI" id="MGI:2159682">
    <property type="gene designation" value="Havcr2"/>
</dbReference>
<dbReference type="VEuPathDB" id="HostDB:ENSMUSG00000020399"/>
<dbReference type="eggNOG" id="ENOG502S454">
    <property type="taxonomic scope" value="Eukaryota"/>
</dbReference>
<dbReference type="GeneTree" id="ENSGT00940000154444"/>
<dbReference type="InParanoid" id="Q8VIM0"/>
<dbReference type="OMA" id="EHGPAET"/>
<dbReference type="OrthoDB" id="434099at2759"/>
<dbReference type="PhylomeDB" id="Q8VIM0"/>
<dbReference type="TreeFam" id="TF336163"/>
<dbReference type="BioGRID-ORCS" id="171285">
    <property type="hits" value="1 hit in 81 CRISPR screens"/>
</dbReference>
<dbReference type="ChiTaRS" id="Havcr2">
    <property type="organism name" value="mouse"/>
</dbReference>
<dbReference type="EvolutionaryTrace" id="Q8VIM0"/>
<dbReference type="PRO" id="PR:Q8VIM0"/>
<dbReference type="Proteomes" id="UP000000589">
    <property type="component" value="Chromosome 11"/>
</dbReference>
<dbReference type="RNAct" id="Q8VIM0">
    <property type="molecule type" value="protein"/>
</dbReference>
<dbReference type="Bgee" id="ENSMUSG00000020399">
    <property type="expression patterns" value="Expressed in gastrula and 45 other cell types or tissues"/>
</dbReference>
<dbReference type="ExpressionAtlas" id="Q8VIM0">
    <property type="expression patterns" value="baseline and differential"/>
</dbReference>
<dbReference type="GO" id="GO:0070161">
    <property type="term" value="C:anchoring junction"/>
    <property type="evidence" value="ECO:0007669"/>
    <property type="project" value="UniProtKB-SubCell"/>
</dbReference>
<dbReference type="GO" id="GO:0009986">
    <property type="term" value="C:cell surface"/>
    <property type="evidence" value="ECO:0000314"/>
    <property type="project" value="UniProtKB"/>
</dbReference>
<dbReference type="GO" id="GO:0005769">
    <property type="term" value="C:early endosome"/>
    <property type="evidence" value="ECO:0000314"/>
    <property type="project" value="UniProtKB"/>
</dbReference>
<dbReference type="GO" id="GO:0005576">
    <property type="term" value="C:extracellular region"/>
    <property type="evidence" value="ECO:0007669"/>
    <property type="project" value="UniProtKB-SubCell"/>
</dbReference>
<dbReference type="GO" id="GO:0001772">
    <property type="term" value="C:immunological synapse"/>
    <property type="evidence" value="ECO:0000314"/>
    <property type="project" value="UniProtKB"/>
</dbReference>
<dbReference type="GO" id="GO:0005886">
    <property type="term" value="C:plasma membrane"/>
    <property type="evidence" value="ECO:0000304"/>
    <property type="project" value="Reactome"/>
</dbReference>
<dbReference type="GO" id="GO:0046872">
    <property type="term" value="F:metal ion binding"/>
    <property type="evidence" value="ECO:0007669"/>
    <property type="project" value="UniProtKB-KW"/>
</dbReference>
<dbReference type="GO" id="GO:0004888">
    <property type="term" value="F:transmembrane signaling receptor activity"/>
    <property type="evidence" value="ECO:0007669"/>
    <property type="project" value="Ensembl"/>
</dbReference>
<dbReference type="GO" id="GO:0002250">
    <property type="term" value="P:adaptive immune response"/>
    <property type="evidence" value="ECO:0007669"/>
    <property type="project" value="UniProtKB-KW"/>
</dbReference>
<dbReference type="GO" id="GO:0071222">
    <property type="term" value="P:cellular response to lipopolysaccharide"/>
    <property type="evidence" value="ECO:0000314"/>
    <property type="project" value="UniProtKB"/>
</dbReference>
<dbReference type="GO" id="GO:0050830">
    <property type="term" value="P:defense response to Gram-positive bacterium"/>
    <property type="evidence" value="ECO:0000315"/>
    <property type="project" value="UniProtKB"/>
</dbReference>
<dbReference type="GO" id="GO:0006954">
    <property type="term" value="P:inflammatory response"/>
    <property type="evidence" value="ECO:0007669"/>
    <property type="project" value="UniProtKB-KW"/>
</dbReference>
<dbReference type="GO" id="GO:0045087">
    <property type="term" value="P:innate immune response"/>
    <property type="evidence" value="ECO:0007669"/>
    <property type="project" value="UniProtKB-KW"/>
</dbReference>
<dbReference type="GO" id="GO:0002281">
    <property type="term" value="P:macrophage activation involved in immune response"/>
    <property type="evidence" value="ECO:0000315"/>
    <property type="project" value="UniProtKB"/>
</dbReference>
<dbReference type="GO" id="GO:0060135">
    <property type="term" value="P:maternal process involved in female pregnancy"/>
    <property type="evidence" value="ECO:0000314"/>
    <property type="project" value="UniProtKB"/>
</dbReference>
<dbReference type="GO" id="GO:0002519">
    <property type="term" value="P:natural killer cell tolerance induction"/>
    <property type="evidence" value="ECO:0007669"/>
    <property type="project" value="Ensembl"/>
</dbReference>
<dbReference type="GO" id="GO:1900425">
    <property type="term" value="P:negative regulation of defense response to bacterium"/>
    <property type="evidence" value="ECO:0000315"/>
    <property type="project" value="UniProtKB"/>
</dbReference>
<dbReference type="GO" id="GO:0071656">
    <property type="term" value="P:negative regulation of granulocyte colony-stimulating factor production"/>
    <property type="evidence" value="ECO:0007669"/>
    <property type="project" value="Ensembl"/>
</dbReference>
<dbReference type="GO" id="GO:0002838">
    <property type="term" value="P:negative regulation of immune response to tumor cell"/>
    <property type="evidence" value="ECO:0000315"/>
    <property type="project" value="UniProtKB"/>
</dbReference>
<dbReference type="GO" id="GO:2000521">
    <property type="term" value="P:negative regulation of immunological synapse formation"/>
    <property type="evidence" value="ECO:0000315"/>
    <property type="project" value="UniProtKB"/>
</dbReference>
<dbReference type="GO" id="GO:0045824">
    <property type="term" value="P:negative regulation of innate immune response"/>
    <property type="evidence" value="ECO:0000315"/>
    <property type="project" value="UniProtKB"/>
</dbReference>
<dbReference type="GO" id="GO:0032687">
    <property type="term" value="P:negative regulation of interferon-alpha production"/>
    <property type="evidence" value="ECO:0007669"/>
    <property type="project" value="Ensembl"/>
</dbReference>
<dbReference type="GO" id="GO:0032703">
    <property type="term" value="P:negative regulation of interleukin-2 production"/>
    <property type="evidence" value="ECO:0000315"/>
    <property type="project" value="UniProtKB"/>
</dbReference>
<dbReference type="GO" id="GO:0032712">
    <property type="term" value="P:negative regulation of interleukin-3 production"/>
    <property type="evidence" value="ECO:0007669"/>
    <property type="project" value="Ensembl"/>
</dbReference>
<dbReference type="GO" id="GO:0032715">
    <property type="term" value="P:negative regulation of interleukin-6 production"/>
    <property type="evidence" value="ECO:0000315"/>
    <property type="project" value="UniProtKB"/>
</dbReference>
<dbReference type="GO" id="GO:0030886">
    <property type="term" value="P:negative regulation of myeloid dendritic cell activation"/>
    <property type="evidence" value="ECO:0007669"/>
    <property type="project" value="Ensembl"/>
</dbReference>
<dbReference type="GO" id="GO:0032815">
    <property type="term" value="P:negative regulation of natural killer cell activation"/>
    <property type="evidence" value="ECO:0000315"/>
    <property type="project" value="UniProtKB"/>
</dbReference>
<dbReference type="GO" id="GO:0002859">
    <property type="term" value="P:negative regulation of natural killer cell mediated cytotoxicity directed against tumor cell target"/>
    <property type="evidence" value="ECO:0000315"/>
    <property type="project" value="UniProtKB"/>
</dbReference>
<dbReference type="GO" id="GO:2001189">
    <property type="term" value="P:negative regulation of T cell activation via T cell receptor contact with antigen bound to MHC molecule on antigen presenting cell"/>
    <property type="evidence" value="ECO:0007669"/>
    <property type="project" value="Ensembl"/>
</dbReference>
<dbReference type="GO" id="GO:0042130">
    <property type="term" value="P:negative regulation of T cell proliferation"/>
    <property type="evidence" value="ECO:0000315"/>
    <property type="project" value="UniProtKB"/>
</dbReference>
<dbReference type="GO" id="GO:0002826">
    <property type="term" value="P:negative regulation of T-helper 1 type immune response"/>
    <property type="evidence" value="ECO:0000315"/>
    <property type="project" value="UniProtKB"/>
</dbReference>
<dbReference type="GO" id="GO:0032720">
    <property type="term" value="P:negative regulation of tumor necrosis factor production"/>
    <property type="evidence" value="ECO:0007669"/>
    <property type="project" value="Ensembl"/>
</dbReference>
<dbReference type="GO" id="GO:0032480">
    <property type="term" value="P:negative regulation of type I interferon production"/>
    <property type="evidence" value="ECO:0000315"/>
    <property type="project" value="UniProtKB"/>
</dbReference>
<dbReference type="GO" id="GO:0032689">
    <property type="term" value="P:negative regulation of type II interferon production"/>
    <property type="evidence" value="ECO:0000315"/>
    <property type="project" value="UniProtKB"/>
</dbReference>
<dbReference type="GO" id="GO:0032722">
    <property type="term" value="P:positive regulation of chemokine production"/>
    <property type="evidence" value="ECO:0000315"/>
    <property type="project" value="UniProtKB"/>
</dbReference>
<dbReference type="GO" id="GO:0001819">
    <property type="term" value="P:positive regulation of cytokine production"/>
    <property type="evidence" value="ECO:0000315"/>
    <property type="project" value="UniProtKB"/>
</dbReference>
<dbReference type="GO" id="GO:1900426">
    <property type="term" value="P:positive regulation of defense response to bacterium"/>
    <property type="evidence" value="ECO:0000315"/>
    <property type="project" value="UniProtKB"/>
</dbReference>
<dbReference type="GO" id="GO:0070374">
    <property type="term" value="P:positive regulation of ERK1 and ERK2 cascade"/>
    <property type="evidence" value="ECO:0000314"/>
    <property type="project" value="UniProtKB"/>
</dbReference>
<dbReference type="GO" id="GO:0045089">
    <property type="term" value="P:positive regulation of innate immune response"/>
    <property type="evidence" value="ECO:0000315"/>
    <property type="project" value="UniProtKB"/>
</dbReference>
<dbReference type="GO" id="GO:0032732">
    <property type="term" value="P:positive regulation of interleukin-1 production"/>
    <property type="evidence" value="ECO:0000315"/>
    <property type="project" value="UniProtKB"/>
</dbReference>
<dbReference type="GO" id="GO:0032753">
    <property type="term" value="P:positive regulation of interleukin-4 production"/>
    <property type="evidence" value="ECO:0007669"/>
    <property type="project" value="Ensembl"/>
</dbReference>
<dbReference type="GO" id="GO:0043032">
    <property type="term" value="P:positive regulation of macrophage activation"/>
    <property type="evidence" value="ECO:0000315"/>
    <property type="project" value="UniProtKB"/>
</dbReference>
<dbReference type="GO" id="GO:1901224">
    <property type="term" value="P:positive regulation of non-canonical NF-kappaB signal transduction"/>
    <property type="evidence" value="ECO:0000314"/>
    <property type="project" value="UniProtKB"/>
</dbReference>
<dbReference type="GO" id="GO:0042102">
    <property type="term" value="P:positive regulation of T cell proliferation"/>
    <property type="evidence" value="ECO:0000315"/>
    <property type="project" value="UniProtKB"/>
</dbReference>
<dbReference type="GO" id="GO:0032760">
    <property type="term" value="P:positive regulation of tumor necrosis factor production"/>
    <property type="evidence" value="ECO:0000315"/>
    <property type="project" value="UniProtKB"/>
</dbReference>
<dbReference type="GO" id="GO:0032729">
    <property type="term" value="P:positive regulation of type II interferon production"/>
    <property type="evidence" value="ECO:0000315"/>
    <property type="project" value="UniProtKB"/>
</dbReference>
<dbReference type="GO" id="GO:0002652">
    <property type="term" value="P:regulation of tolerance induction dependent upon immune response"/>
    <property type="evidence" value="ECO:0000315"/>
    <property type="project" value="UniProtKB"/>
</dbReference>
<dbReference type="GO" id="GO:0034138">
    <property type="term" value="P:toll-like receptor 3 signaling pathway"/>
    <property type="evidence" value="ECO:0000315"/>
    <property type="project" value="UniProtKB"/>
</dbReference>
<dbReference type="GO" id="GO:0034154">
    <property type="term" value="P:toll-like receptor 7 signaling pathway"/>
    <property type="evidence" value="ECO:0000315"/>
    <property type="project" value="UniProtKB"/>
</dbReference>
<dbReference type="GO" id="GO:0034162">
    <property type="term" value="P:toll-like receptor 9 signaling pathway"/>
    <property type="evidence" value="ECO:0000315"/>
    <property type="project" value="UniProtKB"/>
</dbReference>
<dbReference type="CDD" id="cd20982">
    <property type="entry name" value="IgV_TIM-3_like"/>
    <property type="match status" value="1"/>
</dbReference>
<dbReference type="FunFam" id="2.60.40.10:FF:000774">
    <property type="entry name" value="Hepatitis A virus cellular receptor 1"/>
    <property type="match status" value="1"/>
</dbReference>
<dbReference type="Gene3D" id="2.60.40.10">
    <property type="entry name" value="Immunoglobulins"/>
    <property type="match status" value="1"/>
</dbReference>
<dbReference type="InterPro" id="IPR007110">
    <property type="entry name" value="Ig-like_dom"/>
</dbReference>
<dbReference type="InterPro" id="IPR036179">
    <property type="entry name" value="Ig-like_dom_sf"/>
</dbReference>
<dbReference type="InterPro" id="IPR013783">
    <property type="entry name" value="Ig-like_fold"/>
</dbReference>
<dbReference type="InterPro" id="IPR003599">
    <property type="entry name" value="Ig_sub"/>
</dbReference>
<dbReference type="InterPro" id="IPR013106">
    <property type="entry name" value="Ig_V-set"/>
</dbReference>
<dbReference type="InterPro" id="IPR051669">
    <property type="entry name" value="Immune_Mod/Transcr_Coactivator"/>
</dbReference>
<dbReference type="PANTHER" id="PTHR15498:SF73">
    <property type="entry name" value="HEPATITIS A VIRUS CELLULAR RECEPTOR 2"/>
    <property type="match status" value="1"/>
</dbReference>
<dbReference type="PANTHER" id="PTHR15498">
    <property type="entry name" value="T-CELL IMMUNOGLOBULIN AND MUCIN DOMAIN CONTAINING TIM"/>
    <property type="match status" value="1"/>
</dbReference>
<dbReference type="Pfam" id="PF07686">
    <property type="entry name" value="V-set"/>
    <property type="match status" value="1"/>
</dbReference>
<dbReference type="SMART" id="SM00409">
    <property type="entry name" value="IG"/>
    <property type="match status" value="1"/>
</dbReference>
<dbReference type="SUPFAM" id="SSF48726">
    <property type="entry name" value="Immunoglobulin"/>
    <property type="match status" value="1"/>
</dbReference>
<dbReference type="PROSITE" id="PS50835">
    <property type="entry name" value="IG_LIKE"/>
    <property type="match status" value="1"/>
</dbReference>
<protein>
    <recommendedName>
        <fullName>Hepatitis A virus cellular receptor 2 homolog</fullName>
        <shortName>HAVcr-2</shortName>
    </recommendedName>
    <alternativeName>
        <fullName>T-cell immunoglobulin and mucin domain-containing protein 3</fullName>
        <shortName>TIMD-3</shortName>
    </alternativeName>
    <alternativeName>
        <fullName>T-cell immunoglobulin mucin receptor 3</fullName>
        <shortName>TIM-3</shortName>
    </alternativeName>
    <alternativeName>
        <fullName>T-cell membrane protein 3</fullName>
    </alternativeName>
    <cdAntigenName>CD366</cdAntigenName>
</protein>